<evidence type="ECO:0000250" key="1"/>
<evidence type="ECO:0000255" key="2">
    <source>
        <dbReference type="PROSITE-ProRule" id="PRU00125"/>
    </source>
</evidence>
<evidence type="ECO:0000255" key="3">
    <source>
        <dbReference type="PROSITE-ProRule" id="PRU00636"/>
    </source>
</evidence>
<evidence type="ECO:0000256" key="4">
    <source>
        <dbReference type="SAM" id="MobiDB-lite"/>
    </source>
</evidence>
<evidence type="ECO:0000305" key="5"/>
<evidence type="ECO:0000312" key="6">
    <source>
        <dbReference type="EMBL" id="AAH75470.1"/>
    </source>
</evidence>
<evidence type="ECO:0000312" key="7">
    <source>
        <dbReference type="EMBL" id="CAJ82802.1"/>
    </source>
</evidence>
<reference evidence="7" key="1">
    <citation type="submission" date="2006-10" db="EMBL/GenBank/DDBJ databases">
        <authorList>
            <consortium name="Sanger Xenopus tropicalis EST/cDNA project"/>
        </authorList>
    </citation>
    <scope>NUCLEOTIDE SEQUENCE [LARGE SCALE MRNA]</scope>
    <source>
        <tissue evidence="7">Neurula</tissue>
    </source>
</reference>
<reference evidence="7" key="2">
    <citation type="submission" date="2004-06" db="EMBL/GenBank/DDBJ databases">
        <authorList>
            <consortium name="NIH - Xenopus Gene Collection (XGC) project"/>
        </authorList>
    </citation>
    <scope>NUCLEOTIDE SEQUENCE [LARGE SCALE MRNA]</scope>
    <source>
        <tissue evidence="6">Tail bud</tissue>
    </source>
</reference>
<name>TES_XENTR</name>
<comment type="function">
    <text evidence="1">Scaffold protein that may play a role in cell adhesion, cell spreading and in the reorganization of the actin cytoskeleton. May inhibit cell growth (By similarity). Regulates cranial neural crest migration. Acts together with prickle1 to control axial elongation (By similarity).</text>
</comment>
<comment type="subcellular location">
    <subcellularLocation>
        <location evidence="1">Cytoplasm</location>
        <location evidence="1">Cell cortex</location>
    </subcellularLocation>
    <subcellularLocation>
        <location evidence="1">Cell junction</location>
        <location evidence="1">Focal adhesion</location>
    </subcellularLocation>
    <text evidence="1">Detected along actin stress fibers.</text>
</comment>
<comment type="domain">
    <text evidence="1">The N-terminal and the C-terminal halves of the protein can associate with each other, thereby hindering interactions with other proteins.</text>
</comment>
<comment type="similarity">
    <text evidence="5">Belongs to the prickle / espinas / testin family.</text>
</comment>
<proteinExistence type="evidence at transcript level"/>
<organism>
    <name type="scientific">Xenopus tropicalis</name>
    <name type="common">Western clawed frog</name>
    <name type="synonym">Silurana tropicalis</name>
    <dbReference type="NCBI Taxonomy" id="8364"/>
    <lineage>
        <taxon>Eukaryota</taxon>
        <taxon>Metazoa</taxon>
        <taxon>Chordata</taxon>
        <taxon>Craniata</taxon>
        <taxon>Vertebrata</taxon>
        <taxon>Euteleostomi</taxon>
        <taxon>Amphibia</taxon>
        <taxon>Batrachia</taxon>
        <taxon>Anura</taxon>
        <taxon>Pipoidea</taxon>
        <taxon>Pipidae</taxon>
        <taxon>Xenopodinae</taxon>
        <taxon>Xenopus</taxon>
        <taxon>Silurana</taxon>
    </lineage>
</organism>
<gene>
    <name evidence="7" type="primary">tes</name>
    <name type="ORF">TNeu019j18.1</name>
</gene>
<sequence>MELENKLKKVTLGHEEGFGAPCLKCKEKCEGFELHFWRKVCRNCKCGQEEHSILSNNEDDRKVGKLFEDTKYTALIAKLKTDGIPTYKRNVMILTSPVAAKKDVSINTVTYEWAPPVQNQALARRYMELIPKDKQPVAGSEGAQYRKKQLAKQLPAHDQDPSKCHELSPNEVKQMEQFVKKYKNEVLGVGDVKLPKEVEAQACGAGRSTNGSLSTLTTVKGTEDKVAAQKESTYYCFRCKENMREGDPAVYAERAGYDKLWHPSCFVCFTCNELLVDMIYFWKNGKLYCGRHYCDSEKPRCAGCDELIFSNEYTQAEGLNWHLKHFCCFDCDCVLAGEIYVMVNDKPVCKLCYVKNHAVSCQGCHNAIDPEVQRVSYNGFHWHAAPECFICSCCSKCLIGQKFMPIQGMVFCSVDCKKKMSS</sequence>
<keyword id="KW-0965">Cell junction</keyword>
<keyword id="KW-0963">Cytoplasm</keyword>
<keyword id="KW-0217">Developmental protein</keyword>
<keyword id="KW-0440">LIM domain</keyword>
<keyword id="KW-0479">Metal-binding</keyword>
<keyword id="KW-1185">Reference proteome</keyword>
<keyword id="KW-0677">Repeat</keyword>
<keyword id="KW-0862">Zinc</keyword>
<protein>
    <recommendedName>
        <fullName>Testin</fullName>
    </recommendedName>
</protein>
<accession>Q6DIR5</accession>
<dbReference type="EMBL" id="CR942607">
    <property type="protein sequence ID" value="CAJ82802.1"/>
    <property type="molecule type" value="mRNA"/>
</dbReference>
<dbReference type="EMBL" id="BC075470">
    <property type="protein sequence ID" value="AAH75470.1"/>
    <property type="molecule type" value="mRNA"/>
</dbReference>
<dbReference type="RefSeq" id="NP_001004961.1">
    <property type="nucleotide sequence ID" value="NM_001004961.2"/>
</dbReference>
<dbReference type="SMR" id="Q6DIR5"/>
<dbReference type="FunCoup" id="Q6DIR5">
    <property type="interactions" value="904"/>
</dbReference>
<dbReference type="STRING" id="8364.ENSXETP00000048909"/>
<dbReference type="PaxDb" id="8364-ENSXETP00000025315"/>
<dbReference type="DNASU" id="448383"/>
<dbReference type="GeneID" id="448383"/>
<dbReference type="KEGG" id="xtr:448383"/>
<dbReference type="AGR" id="Xenbase:XB-GENE-1015357"/>
<dbReference type="CTD" id="26136"/>
<dbReference type="Xenbase" id="XB-GENE-1015357">
    <property type="gene designation" value="tes"/>
</dbReference>
<dbReference type="eggNOG" id="KOG1704">
    <property type="taxonomic scope" value="Eukaryota"/>
</dbReference>
<dbReference type="HOGENOM" id="CLU_008937_1_1_1"/>
<dbReference type="InParanoid" id="Q6DIR5"/>
<dbReference type="OMA" id="NFSCHQC"/>
<dbReference type="OrthoDB" id="10069167at2759"/>
<dbReference type="PhylomeDB" id="Q6DIR5"/>
<dbReference type="TreeFam" id="TF313265"/>
<dbReference type="Proteomes" id="UP000008143">
    <property type="component" value="Chromosome 3"/>
</dbReference>
<dbReference type="Bgee" id="ENSXETG00000011568">
    <property type="expression patterns" value="Expressed in ovary and 11 other cell types or tissues"/>
</dbReference>
<dbReference type="GO" id="GO:0005938">
    <property type="term" value="C:cell cortex"/>
    <property type="evidence" value="ECO:0000250"/>
    <property type="project" value="UniProtKB"/>
</dbReference>
<dbReference type="GO" id="GO:0005737">
    <property type="term" value="C:cytoplasm"/>
    <property type="evidence" value="ECO:0000250"/>
    <property type="project" value="UniProtKB"/>
</dbReference>
<dbReference type="GO" id="GO:0005925">
    <property type="term" value="C:focal adhesion"/>
    <property type="evidence" value="ECO:0007669"/>
    <property type="project" value="UniProtKB-SubCell"/>
</dbReference>
<dbReference type="GO" id="GO:0008270">
    <property type="term" value="F:zinc ion binding"/>
    <property type="evidence" value="ECO:0000250"/>
    <property type="project" value="UniProtKB"/>
</dbReference>
<dbReference type="GO" id="GO:0001755">
    <property type="term" value="P:neural crest cell migration"/>
    <property type="evidence" value="ECO:0000250"/>
    <property type="project" value="UniProtKB"/>
</dbReference>
<dbReference type="CDD" id="cd09413">
    <property type="entry name" value="LIM1_Testin"/>
    <property type="match status" value="1"/>
</dbReference>
<dbReference type="CDD" id="cd09416">
    <property type="entry name" value="LIM2_Testin"/>
    <property type="match status" value="1"/>
</dbReference>
<dbReference type="CDD" id="cd09419">
    <property type="entry name" value="LIM3_Testin"/>
    <property type="match status" value="1"/>
</dbReference>
<dbReference type="CDD" id="cd09829">
    <property type="entry name" value="PET_testin"/>
    <property type="match status" value="1"/>
</dbReference>
<dbReference type="FunFam" id="2.10.110.10:FF:000061">
    <property type="entry name" value="Testin"/>
    <property type="match status" value="1"/>
</dbReference>
<dbReference type="FunFam" id="2.10.110.10:FF:000065">
    <property type="entry name" value="Testin"/>
    <property type="match status" value="1"/>
</dbReference>
<dbReference type="FunFam" id="2.10.110.10:FF:000005">
    <property type="entry name" value="Testin isoform 1"/>
    <property type="match status" value="1"/>
</dbReference>
<dbReference type="Gene3D" id="2.10.110.10">
    <property type="entry name" value="Cysteine Rich Protein"/>
    <property type="match status" value="3"/>
</dbReference>
<dbReference type="InterPro" id="IPR034958">
    <property type="entry name" value="LIM1_Testin"/>
</dbReference>
<dbReference type="InterPro" id="IPR034959">
    <property type="entry name" value="LIM2_Testin"/>
</dbReference>
<dbReference type="InterPro" id="IPR034960">
    <property type="entry name" value="LIM3_Testin"/>
</dbReference>
<dbReference type="InterPro" id="IPR010442">
    <property type="entry name" value="PET_domain"/>
</dbReference>
<dbReference type="InterPro" id="IPR033724">
    <property type="entry name" value="PET_testin"/>
</dbReference>
<dbReference type="InterPro" id="IPR047120">
    <property type="entry name" value="Pk/Esn/Tes"/>
</dbReference>
<dbReference type="InterPro" id="IPR001781">
    <property type="entry name" value="Znf_LIM"/>
</dbReference>
<dbReference type="PANTHER" id="PTHR24211">
    <property type="entry name" value="LIM DOMAIN-CONTAINING PROTEIN"/>
    <property type="match status" value="1"/>
</dbReference>
<dbReference type="PANTHER" id="PTHR24211:SF1">
    <property type="entry name" value="TESTIN"/>
    <property type="match status" value="1"/>
</dbReference>
<dbReference type="Pfam" id="PF00412">
    <property type="entry name" value="LIM"/>
    <property type="match status" value="3"/>
</dbReference>
<dbReference type="Pfam" id="PF06297">
    <property type="entry name" value="PET"/>
    <property type="match status" value="1"/>
</dbReference>
<dbReference type="SMART" id="SM00132">
    <property type="entry name" value="LIM"/>
    <property type="match status" value="3"/>
</dbReference>
<dbReference type="SUPFAM" id="SSF57716">
    <property type="entry name" value="Glucocorticoid receptor-like (DNA-binding domain)"/>
    <property type="match status" value="2"/>
</dbReference>
<dbReference type="PROSITE" id="PS00478">
    <property type="entry name" value="LIM_DOMAIN_1"/>
    <property type="match status" value="2"/>
</dbReference>
<dbReference type="PROSITE" id="PS50023">
    <property type="entry name" value="LIM_DOMAIN_2"/>
    <property type="match status" value="3"/>
</dbReference>
<dbReference type="PROSITE" id="PS51303">
    <property type="entry name" value="PET"/>
    <property type="match status" value="1"/>
</dbReference>
<feature type="chain" id="PRO_0000283796" description="Testin">
    <location>
        <begin position="1"/>
        <end position="422"/>
    </location>
</feature>
<feature type="domain" description="PET" evidence="3">
    <location>
        <begin position="92"/>
        <end position="199"/>
    </location>
</feature>
<feature type="domain" description="LIM zinc-binding 1" evidence="2">
    <location>
        <begin position="234"/>
        <end position="299"/>
    </location>
</feature>
<feature type="domain" description="LIM zinc-binding 2" evidence="2">
    <location>
        <begin position="300"/>
        <end position="359"/>
    </location>
</feature>
<feature type="domain" description="LIM zinc-binding 3" evidence="2">
    <location>
        <begin position="360"/>
        <end position="422"/>
    </location>
</feature>
<feature type="region of interest" description="Disordered" evidence="4">
    <location>
        <begin position="135"/>
        <end position="165"/>
    </location>
</feature>
<feature type="compositionally biased region" description="Basic and acidic residues" evidence="4">
    <location>
        <begin position="155"/>
        <end position="165"/>
    </location>
</feature>